<gene>
    <name type="primary">arpc2-b</name>
    <name evidence="6" type="ORF">XELAEV_18046980mg</name>
</gene>
<keyword id="KW-0009">Actin-binding</keyword>
<keyword id="KW-0966">Cell projection</keyword>
<keyword id="KW-0963">Cytoplasm</keyword>
<keyword id="KW-0206">Cytoskeleton</keyword>
<keyword id="KW-0539">Nucleus</keyword>
<keyword id="KW-1185">Reference proteome</keyword>
<sequence length="300" mass="34339">MILLEVNNRIIEEILTLKFENAAAGNKPEVVEVTFADFDGVLYHVSNPNGDKAKVMISISLKFYKELQEHGADEVLKNVYGNFLVAPESGYNVSLLYDLEALPSNKDSVIHQAGMLKRNCFASVFEKYFKFQEEGKEGEKRAVIHYREDETMYVEAKKDRVTVVFSTVFKDDDDVVIGKVFMQEFKEGRRASHTAPQVLFSHREPPLELKDTDAAVGDNIGYITFVLFPRHTSANARDNTINLIHTFRDYLHYHIKCSKAYIHTRMRAKTSDFLKVLNRARPDAEKKEMKTITGKTFAAR</sequence>
<organism>
    <name type="scientific">Xenopus laevis</name>
    <name type="common">African clawed frog</name>
    <dbReference type="NCBI Taxonomy" id="8355"/>
    <lineage>
        <taxon>Eukaryota</taxon>
        <taxon>Metazoa</taxon>
        <taxon>Chordata</taxon>
        <taxon>Craniata</taxon>
        <taxon>Vertebrata</taxon>
        <taxon>Euteleostomi</taxon>
        <taxon>Amphibia</taxon>
        <taxon>Batrachia</taxon>
        <taxon>Anura</taxon>
        <taxon>Pipoidea</taxon>
        <taxon>Pipidae</taxon>
        <taxon>Xenopodinae</taxon>
        <taxon>Xenopus</taxon>
        <taxon>Xenopus</taxon>
    </lineage>
</organism>
<comment type="function">
    <text evidence="1 2 5">Actin-binding component of the Arp2/3 complex, a multiprotein complex that mediates actin polymerization upon stimulation by nucleation-promoting factor (NPF). The Arp2/3 complex mediates the formation of branched actin networks in the cytoplasm, providing the force for cell motility (By similarity). In addition to its role in the cytoplasmic cytoskeleton, the Arp2/3 complex also promotes actin polymerization in the nucleus, thereby regulating gene transcription and repair of damaged DNA (Probable). The Arp2/3 complex promotes homologous recombination (HR) repair in response to DNA damage by promoting nuclear actin polymerization, leading to drive motility of double-strand breaks (DSBs) (By similarity).</text>
</comment>
<comment type="subunit">
    <text evidence="3">Component of the Arp2/3 complex composed of actr2/arp2, actr3/arp3, arpc1 (arpc1a or arpc1b), arpc2, arpc3, arpc4 and arpc5.</text>
</comment>
<comment type="subcellular location">
    <subcellularLocation>
        <location evidence="2">Cytoplasm</location>
        <location evidence="2">Cytoskeleton</location>
    </subcellularLocation>
    <subcellularLocation>
        <location evidence="2">Cell projection</location>
    </subcellularLocation>
    <subcellularLocation>
        <location evidence="3">Nucleus</location>
    </subcellularLocation>
</comment>
<comment type="similarity">
    <text evidence="4">Belongs to the ARPC2 family.</text>
</comment>
<proteinExistence type="evidence at protein level"/>
<reference key="1">
    <citation type="submission" date="2004-05" db="EMBL/GenBank/DDBJ databases">
        <authorList>
            <consortium name="NIH - Xenopus Gene Collection (XGC) project"/>
        </authorList>
    </citation>
    <scope>NUCLEOTIDE SEQUENCE [LARGE SCALE MRNA]</scope>
    <source>
        <tissue>Kidney</tissue>
    </source>
</reference>
<reference key="2">
    <citation type="journal article" date="2016" name="Nature">
        <title>Genome evolution in the allotetraploid frog Xenopus laevis.</title>
        <authorList>
            <person name="Session A.M."/>
            <person name="Uno Y."/>
            <person name="Kwon T."/>
            <person name="Chapman J.A."/>
            <person name="Toyoda A."/>
            <person name="Takahashi S."/>
            <person name="Fukui A."/>
            <person name="Hikosaka A."/>
            <person name="Suzuki A."/>
            <person name="Kondo M."/>
            <person name="van Heeringen S.J."/>
            <person name="Quigley I."/>
            <person name="Heinz S."/>
            <person name="Ogino H."/>
            <person name="Ochi H."/>
            <person name="Hellsten U."/>
            <person name="Lyons J.B."/>
            <person name="Simakov O."/>
            <person name="Putnam N."/>
            <person name="Stites J."/>
            <person name="Kuroki Y."/>
            <person name="Tanaka T."/>
            <person name="Michiue T."/>
            <person name="Watanabe M."/>
            <person name="Bogdanovic O."/>
            <person name="Lister R."/>
            <person name="Georgiou G."/>
            <person name="Paranjpe S.S."/>
            <person name="van Kruijsbergen I."/>
            <person name="Shu S."/>
            <person name="Carlson J."/>
            <person name="Kinoshita T."/>
            <person name="Ohta Y."/>
            <person name="Mawaribuchi S."/>
            <person name="Jenkins J."/>
            <person name="Grimwood J."/>
            <person name="Schmutz J."/>
            <person name="Mitros T."/>
            <person name="Mozaffari S.V."/>
            <person name="Suzuki Y."/>
            <person name="Haramoto Y."/>
            <person name="Yamamoto T.S."/>
            <person name="Takagi C."/>
            <person name="Heald R."/>
            <person name="Miller K."/>
            <person name="Haudenschild C."/>
            <person name="Kitzman J."/>
            <person name="Nakayama T."/>
            <person name="Izutsu Y."/>
            <person name="Robert J."/>
            <person name="Fortriede J."/>
            <person name="Burns K."/>
            <person name="Lotay V."/>
            <person name="Karimi K."/>
            <person name="Yasuoka Y."/>
            <person name="Dichmann D.S."/>
            <person name="Flajnik M.F."/>
            <person name="Houston D.W."/>
            <person name="Shendure J."/>
            <person name="DuPasquier L."/>
            <person name="Vize P.D."/>
            <person name="Zorn A.M."/>
            <person name="Ito M."/>
            <person name="Marcotte E.M."/>
            <person name="Wallingford J.B."/>
            <person name="Ito Y."/>
            <person name="Asashima M."/>
            <person name="Ueno N."/>
            <person name="Matsuda Y."/>
            <person name="Veenstra G.J."/>
            <person name="Fujiyama A."/>
            <person name="Harland R.M."/>
            <person name="Taira M."/>
            <person name="Rokhsar D.S."/>
        </authorList>
    </citation>
    <scope>NUCLEOTIDE SEQUENCE [LARGE SCALE GENOMIC DNA]</scope>
    <source>
        <strain>J</strain>
    </source>
</reference>
<reference key="3">
    <citation type="journal article" date="2018" name="Nature">
        <title>Nuclear ARP2/3 drives DNA break clustering for homology-directed repair.</title>
        <authorList>
            <person name="Schrank B.R."/>
            <person name="Aparicio T."/>
            <person name="Li Y."/>
            <person name="Chang W."/>
            <person name="Chait B.T."/>
            <person name="Gundersen G.G."/>
            <person name="Gottesman M.E."/>
            <person name="Gautier J."/>
        </authorList>
    </citation>
    <scope>FUNCTION</scope>
    <scope>SUBCELLULAR LOCATION</scope>
    <scope>IDENTIFICATION IN THE ARP2/3 COMPLEX</scope>
    <scope>IDENTIFICATION BY MASS SPECTROMETRY</scope>
</reference>
<dbReference type="EMBL" id="BC070989">
    <property type="protein sequence ID" value="AAH70989.1"/>
    <property type="molecule type" value="mRNA"/>
</dbReference>
<dbReference type="EMBL" id="CM004483">
    <property type="protein sequence ID" value="OCT60954.1"/>
    <property type="molecule type" value="Genomic_DNA"/>
</dbReference>
<dbReference type="RefSeq" id="NP_001085042.1">
    <property type="nucleotide sequence ID" value="NM_001091573.1"/>
</dbReference>
<dbReference type="SMR" id="Q6IRB1"/>
<dbReference type="STRING" id="8355.Q6IRB1"/>
<dbReference type="PaxDb" id="8355-Q6IRB1"/>
<dbReference type="DNASU" id="432109"/>
<dbReference type="GeneID" id="432109"/>
<dbReference type="KEGG" id="xla:432109"/>
<dbReference type="AGR" id="Xenbase:XB-GENE-17346100"/>
<dbReference type="CTD" id="432109"/>
<dbReference type="OMA" id="YFDFQEE"/>
<dbReference type="OrthoDB" id="148331at2759"/>
<dbReference type="Proteomes" id="UP000186698">
    <property type="component" value="Chromosome 9_10S"/>
</dbReference>
<dbReference type="Proteomes" id="UP000694892">
    <property type="component" value="Chromosome 9_10S"/>
</dbReference>
<dbReference type="Bgee" id="432109">
    <property type="expression patterns" value="Expressed in spleen and 19 other cell types or tissues"/>
</dbReference>
<dbReference type="GO" id="GO:0005885">
    <property type="term" value="C:Arp2/3 protein complex"/>
    <property type="evidence" value="ECO:0000314"/>
    <property type="project" value="UniProtKB"/>
</dbReference>
<dbReference type="GO" id="GO:0042995">
    <property type="term" value="C:cell projection"/>
    <property type="evidence" value="ECO:0007669"/>
    <property type="project" value="UniProtKB-SubCell"/>
</dbReference>
<dbReference type="GO" id="GO:0005737">
    <property type="term" value="C:cytoplasm"/>
    <property type="evidence" value="ECO:0007669"/>
    <property type="project" value="UniProtKB-KW"/>
</dbReference>
<dbReference type="GO" id="GO:0005634">
    <property type="term" value="C:nucleus"/>
    <property type="evidence" value="ECO:0000314"/>
    <property type="project" value="UniProtKB"/>
</dbReference>
<dbReference type="GO" id="GO:0035861">
    <property type="term" value="C:site of double-strand break"/>
    <property type="evidence" value="ECO:0000314"/>
    <property type="project" value="UniProtKB"/>
</dbReference>
<dbReference type="GO" id="GO:0051015">
    <property type="term" value="F:actin filament binding"/>
    <property type="evidence" value="ECO:0000318"/>
    <property type="project" value="GO_Central"/>
</dbReference>
<dbReference type="GO" id="GO:0005200">
    <property type="term" value="F:structural constituent of cytoskeleton"/>
    <property type="evidence" value="ECO:0000318"/>
    <property type="project" value="GO_Central"/>
</dbReference>
<dbReference type="GO" id="GO:0030041">
    <property type="term" value="P:actin filament polymerization"/>
    <property type="evidence" value="ECO:0007669"/>
    <property type="project" value="InterPro"/>
</dbReference>
<dbReference type="GO" id="GO:0034314">
    <property type="term" value="P:Arp2/3 complex-mediated actin nucleation"/>
    <property type="evidence" value="ECO:0000318"/>
    <property type="project" value="GO_Central"/>
</dbReference>
<dbReference type="FunFam" id="3.30.1460.20:FF:000002">
    <property type="entry name" value="Arp2/3 complex 34 kDa subunit"/>
    <property type="match status" value="1"/>
</dbReference>
<dbReference type="FunFam" id="3.30.1460.20:FF:000004">
    <property type="entry name" value="Arp2/3 complex 34 kDa subunit"/>
    <property type="match status" value="1"/>
</dbReference>
<dbReference type="Gene3D" id="3.30.1460.20">
    <property type="match status" value="2"/>
</dbReference>
<dbReference type="InterPro" id="IPR007188">
    <property type="entry name" value="ARPC2"/>
</dbReference>
<dbReference type="InterPro" id="IPR034666">
    <property type="entry name" value="ARPC2/4"/>
</dbReference>
<dbReference type="PANTHER" id="PTHR12058:SF0">
    <property type="entry name" value="ACTIN-RELATED PROTEIN 2_3 COMPLEX SUBUNIT 2"/>
    <property type="match status" value="1"/>
</dbReference>
<dbReference type="PANTHER" id="PTHR12058">
    <property type="entry name" value="ARP2/3 COMPLEX 34 KDA SUBUNIT"/>
    <property type="match status" value="1"/>
</dbReference>
<dbReference type="Pfam" id="PF04045">
    <property type="entry name" value="P34-Arc"/>
    <property type="match status" value="1"/>
</dbReference>
<dbReference type="SUPFAM" id="SSF69645">
    <property type="entry name" value="Arp2/3 complex subunits"/>
    <property type="match status" value="2"/>
</dbReference>
<name>ARC2B_XENLA</name>
<feature type="chain" id="PRO_0000445560" description="Actin-related protein 2/3 complex subunit 2-B">
    <location>
        <begin position="1"/>
        <end position="300"/>
    </location>
</feature>
<evidence type="ECO:0000250" key="1">
    <source>
        <dbReference type="UniProtKB" id="O15144"/>
    </source>
</evidence>
<evidence type="ECO:0000250" key="2">
    <source>
        <dbReference type="UniProtKB" id="Q0IH88"/>
    </source>
</evidence>
<evidence type="ECO:0000269" key="3">
    <source>
    </source>
</evidence>
<evidence type="ECO:0000305" key="4"/>
<evidence type="ECO:0000305" key="5">
    <source>
    </source>
</evidence>
<evidence type="ECO:0000312" key="6">
    <source>
        <dbReference type="EMBL" id="OCT60954.1"/>
    </source>
</evidence>
<protein>
    <recommendedName>
        <fullName>Actin-related protein 2/3 complex subunit 2-B</fullName>
    </recommendedName>
</protein>
<accession>Q6IRB1</accession>